<gene>
    <name evidence="5" type="primary">glnA</name>
    <name type="ordered locus">PF0450</name>
</gene>
<reference key="1">
    <citation type="journal article" date="1994" name="J. Mol. Evol.">
        <title>Evolutionary relationships of bacterial and archaeal glutamine synthetase genes.</title>
        <authorList>
            <person name="Brown J.R."/>
            <person name="Masuchi Y."/>
            <person name="Robb F.T."/>
            <person name="Doolittle W.F."/>
        </authorList>
    </citation>
    <scope>NUCLEOTIDE SEQUENCE [GENOMIC DNA]</scope>
    <source>
        <strain>ATCC 43587 / DSM 3638 / JCM 8422 / Vc1</strain>
    </source>
</reference>
<reference key="2">
    <citation type="journal article" date="1999" name="Genetics">
        <title>Divergence of the hyperthermophilic archaea Pyrococcus furiosus and P. horikoshii inferred from complete genomic sequences.</title>
        <authorList>
            <person name="Maeder D.L."/>
            <person name="Weiss R.B."/>
            <person name="Dunn D.M."/>
            <person name="Cherry J.L."/>
            <person name="Gonzalez J.M."/>
            <person name="DiRuggiero J."/>
            <person name="Robb F.T."/>
        </authorList>
    </citation>
    <scope>NUCLEOTIDE SEQUENCE [LARGE SCALE GENOMIC DNA]</scope>
    <source>
        <strain>ATCC 43587 / DSM 3638 / JCM 8422 / Vc1</strain>
    </source>
</reference>
<keyword id="KW-0067">ATP-binding</keyword>
<keyword id="KW-0963">Cytoplasm</keyword>
<keyword id="KW-0436">Ligase</keyword>
<keyword id="KW-0460">Magnesium</keyword>
<keyword id="KW-0479">Metal-binding</keyword>
<keyword id="KW-0547">Nucleotide-binding</keyword>
<keyword id="KW-1185">Reference proteome</keyword>
<sequence length="439" mass="50183">MNISVSMNKFDSKIKFVQLVFVDINGMPKGMEIPASRLEEAVTDGISFDGSSVPGFQGIEDSDLVFKADPDTYVEVPWDNVARVYGFIYKDNKPYGADPRGILKRALEELEKEGYKAYIGPEPEFYLFKKNGTWELEIPDVGGYFDILTLDKARDIRREIAEYMPSFGLIPEVLHHEVGKAQHEIDFRYDEALKTADNIVSFKYITKAVAEMHGLYATFMPKPLFGFPGNGMHLHISLWKDGENVFMGEEGLSEIALHFIGGILKHAKALTAVTNPTVNSYKRLVPSYEAPVYISWGYRNRSALIRVPAFWGKGARIEYRCPDPSANPYFAFAAVLKAGLDGIKHKIDPFAYVEENVYEMSEEKRKELGIETLPGSLGEALEELEKDKVVKEALGDAYKNFINYKWKEWESYLEYLEEKHMPKDTKKVTEWELERYFFL</sequence>
<feature type="chain" id="PRO_0000153209" description="Glutamine synthetase">
    <location>
        <begin position="1"/>
        <end position="439"/>
    </location>
</feature>
<feature type="domain" description="GS beta-grasp" evidence="6">
    <location>
        <begin position="12"/>
        <end position="93"/>
    </location>
</feature>
<feature type="domain" description="GS catalytic" evidence="7">
    <location>
        <begin position="99"/>
        <end position="439"/>
    </location>
</feature>
<feature type="binding site" evidence="4">
    <location>
        <position position="122"/>
    </location>
    <ligand>
        <name>Mg(2+)</name>
        <dbReference type="ChEBI" id="CHEBI:18420"/>
        <label>1</label>
    </ligand>
</feature>
<feature type="binding site" evidence="4">
    <location>
        <position position="124"/>
    </location>
    <ligand>
        <name>Mg(2+)</name>
        <dbReference type="ChEBI" id="CHEBI:18420"/>
        <label>2</label>
    </ligand>
</feature>
<feature type="binding site" evidence="4">
    <location>
        <position position="172"/>
    </location>
    <ligand>
        <name>ATP</name>
        <dbReference type="ChEBI" id="CHEBI:30616"/>
    </ligand>
</feature>
<feature type="binding site" evidence="4">
    <location>
        <position position="177"/>
    </location>
    <ligand>
        <name>Mg(2+)</name>
        <dbReference type="ChEBI" id="CHEBI:18420"/>
        <label>2</label>
    </ligand>
</feature>
<feature type="binding site" evidence="4">
    <location>
        <position position="184"/>
    </location>
    <ligand>
        <name>Mg(2+)</name>
        <dbReference type="ChEBI" id="CHEBI:18420"/>
        <label>2</label>
    </ligand>
</feature>
<feature type="binding site" evidence="2">
    <location>
        <position position="229"/>
    </location>
    <ligand>
        <name>L-glutamate</name>
        <dbReference type="ChEBI" id="CHEBI:29985"/>
    </ligand>
</feature>
<feature type="binding site" evidence="4">
    <location>
        <position position="233"/>
    </location>
    <ligand>
        <name>Mg(2+)</name>
        <dbReference type="ChEBI" id="CHEBI:18420"/>
        <label>1</label>
    </ligand>
</feature>
<feature type="binding site" evidence="4">
    <location>
        <begin position="235"/>
        <end position="237"/>
    </location>
    <ligand>
        <name>ATP</name>
        <dbReference type="ChEBI" id="CHEBI:30616"/>
    </ligand>
</feature>
<feature type="binding site" evidence="3">
    <location>
        <position position="237"/>
    </location>
    <ligand>
        <name>ATP</name>
        <dbReference type="ChEBI" id="CHEBI:30616"/>
    </ligand>
</feature>
<feature type="binding site" evidence="4">
    <location>
        <position position="283"/>
    </location>
    <ligand>
        <name>L-glutamate</name>
        <dbReference type="ChEBI" id="CHEBI:29985"/>
    </ligand>
</feature>
<feature type="binding site" evidence="1">
    <location>
        <position position="289"/>
    </location>
    <ligand>
        <name>L-glutamate</name>
        <dbReference type="ChEBI" id="CHEBI:29985"/>
    </ligand>
</feature>
<feature type="binding site" evidence="4">
    <location>
        <position position="301"/>
    </location>
    <ligand>
        <name>ATP</name>
        <dbReference type="ChEBI" id="CHEBI:30616"/>
    </ligand>
</feature>
<feature type="binding site" evidence="4">
    <location>
        <position position="301"/>
    </location>
    <ligand>
        <name>L-glutamate</name>
        <dbReference type="ChEBI" id="CHEBI:29985"/>
    </ligand>
</feature>
<feature type="binding site" evidence="4">
    <location>
        <position position="306"/>
    </location>
    <ligand>
        <name>ATP</name>
        <dbReference type="ChEBI" id="CHEBI:30616"/>
    </ligand>
</feature>
<feature type="binding site" evidence="3">
    <location>
        <position position="313"/>
    </location>
    <ligand>
        <name>ATP</name>
        <dbReference type="ChEBI" id="CHEBI:30616"/>
    </ligand>
</feature>
<feature type="binding site" evidence="4">
    <location>
        <position position="318"/>
    </location>
    <ligand>
        <name>Mg(2+)</name>
        <dbReference type="ChEBI" id="CHEBI:18420"/>
        <label>1</label>
    </ligand>
</feature>
<feature type="binding site" evidence="4">
    <location>
        <position position="320"/>
    </location>
    <ligand>
        <name>L-glutamate</name>
        <dbReference type="ChEBI" id="CHEBI:29985"/>
    </ligand>
</feature>
<feature type="sequence conflict" description="In Ref. 1; AAA71968." evidence="8" ref="1">
    <original>K</original>
    <variation>G</variation>
    <location>
        <position position="203"/>
    </location>
</feature>
<feature type="sequence conflict" description="In Ref. 1; AAA71968." evidence="8" ref="1">
    <original>M</original>
    <variation>L</variation>
    <location>
        <position position="232"/>
    </location>
</feature>
<feature type="sequence conflict" description="In Ref. 1; AAA71968." evidence="8" ref="1">
    <original>A</original>
    <variation>S</variation>
    <location>
        <position position="351"/>
    </location>
</feature>
<feature type="sequence conflict" description="In Ref. 1; AAA71968." evidence="8" ref="1">
    <original>I</original>
    <variation>L</variation>
    <location>
        <position position="370"/>
    </location>
</feature>
<feature type="sequence conflict" description="In Ref. 1; AAA71968." evidence="8" ref="1">
    <original>S</original>
    <variation>N</variation>
    <location>
        <position position="376"/>
    </location>
</feature>
<feature type="sequence conflict" description="In Ref. 1; AAA71968." evidence="8" ref="1">
    <original>E</original>
    <variation>G</variation>
    <location>
        <position position="382"/>
    </location>
</feature>
<feature type="sequence conflict" description="In Ref. 1; AAA71968." evidence="8" ref="1">
    <original>A</original>
    <variation>S</variation>
    <location>
        <position position="397"/>
    </location>
</feature>
<feature type="sequence conflict" description="In Ref. 1; AAA71968." evidence="8" ref="1">
    <original>MPKDTK</original>
    <variation>IPPDTE</variation>
    <location>
        <begin position="421"/>
        <end position="426"/>
    </location>
</feature>
<evidence type="ECO:0000250" key="1">
    <source>
        <dbReference type="UniProtKB" id="P0A1P6"/>
    </source>
</evidence>
<evidence type="ECO:0000250" key="2">
    <source>
        <dbReference type="UniProtKB" id="P12425"/>
    </source>
</evidence>
<evidence type="ECO:0000250" key="3">
    <source>
        <dbReference type="UniProtKB" id="P77961"/>
    </source>
</evidence>
<evidence type="ECO:0000250" key="4">
    <source>
        <dbReference type="UniProtKB" id="P9WN39"/>
    </source>
</evidence>
<evidence type="ECO:0000250" key="5">
    <source>
        <dbReference type="UniProtKB" id="Q9HH09"/>
    </source>
</evidence>
<evidence type="ECO:0000255" key="6">
    <source>
        <dbReference type="PROSITE-ProRule" id="PRU01330"/>
    </source>
</evidence>
<evidence type="ECO:0000255" key="7">
    <source>
        <dbReference type="PROSITE-ProRule" id="PRU01331"/>
    </source>
</evidence>
<evidence type="ECO:0000305" key="8"/>
<dbReference type="EC" id="6.3.1.2" evidence="5"/>
<dbReference type="EMBL" id="L12410">
    <property type="protein sequence ID" value="AAA71968.1"/>
    <property type="molecule type" value="Genomic_DNA"/>
</dbReference>
<dbReference type="EMBL" id="AE009950">
    <property type="protein sequence ID" value="AAL80574.1"/>
    <property type="molecule type" value="Genomic_DNA"/>
</dbReference>
<dbReference type="RefSeq" id="WP_011011567.1">
    <property type="nucleotide sequence ID" value="NZ_CP023154.1"/>
</dbReference>
<dbReference type="SMR" id="Q05907"/>
<dbReference type="STRING" id="186497.PF0450"/>
<dbReference type="PaxDb" id="186497-PF0450"/>
<dbReference type="GeneID" id="41712250"/>
<dbReference type="KEGG" id="pfu:PF0450"/>
<dbReference type="PATRIC" id="fig|186497.12.peg.474"/>
<dbReference type="eggNOG" id="arCOG01909">
    <property type="taxonomic scope" value="Archaea"/>
</dbReference>
<dbReference type="HOGENOM" id="CLU_017290_1_3_2"/>
<dbReference type="OrthoDB" id="36124at2157"/>
<dbReference type="PhylomeDB" id="Q05907"/>
<dbReference type="Proteomes" id="UP000001013">
    <property type="component" value="Chromosome"/>
</dbReference>
<dbReference type="GO" id="GO:0005737">
    <property type="term" value="C:cytoplasm"/>
    <property type="evidence" value="ECO:0007669"/>
    <property type="project" value="UniProtKB-SubCell"/>
</dbReference>
<dbReference type="GO" id="GO:0005524">
    <property type="term" value="F:ATP binding"/>
    <property type="evidence" value="ECO:0007669"/>
    <property type="project" value="UniProtKB-KW"/>
</dbReference>
<dbReference type="GO" id="GO:0004356">
    <property type="term" value="F:glutamine synthetase activity"/>
    <property type="evidence" value="ECO:0007669"/>
    <property type="project" value="UniProtKB-EC"/>
</dbReference>
<dbReference type="GO" id="GO:0046872">
    <property type="term" value="F:metal ion binding"/>
    <property type="evidence" value="ECO:0007669"/>
    <property type="project" value="UniProtKB-KW"/>
</dbReference>
<dbReference type="GO" id="GO:0006542">
    <property type="term" value="P:glutamine biosynthetic process"/>
    <property type="evidence" value="ECO:0007669"/>
    <property type="project" value="InterPro"/>
</dbReference>
<dbReference type="FunFam" id="3.30.590.10:FF:000003">
    <property type="entry name" value="Glutamine synthetase 2"/>
    <property type="match status" value="1"/>
</dbReference>
<dbReference type="Gene3D" id="3.10.20.70">
    <property type="entry name" value="Glutamine synthetase, N-terminal domain"/>
    <property type="match status" value="1"/>
</dbReference>
<dbReference type="Gene3D" id="3.30.590.10">
    <property type="entry name" value="Glutamine synthetase/guanido kinase, catalytic domain"/>
    <property type="match status" value="1"/>
</dbReference>
<dbReference type="InterPro" id="IPR008147">
    <property type="entry name" value="Gln_synt_N"/>
</dbReference>
<dbReference type="InterPro" id="IPR036651">
    <property type="entry name" value="Gln_synt_N_sf"/>
</dbReference>
<dbReference type="InterPro" id="IPR014746">
    <property type="entry name" value="Gln_synth/guanido_kin_cat_dom"/>
</dbReference>
<dbReference type="InterPro" id="IPR008146">
    <property type="entry name" value="Gln_synth_cat_dom"/>
</dbReference>
<dbReference type="InterPro" id="IPR027303">
    <property type="entry name" value="Gln_synth_gly_rich_site"/>
</dbReference>
<dbReference type="InterPro" id="IPR004809">
    <property type="entry name" value="Gln_synth_I"/>
</dbReference>
<dbReference type="InterPro" id="IPR027302">
    <property type="entry name" value="Gln_synth_N_conserv_site"/>
</dbReference>
<dbReference type="NCBIfam" id="TIGR00653">
    <property type="entry name" value="GlnA"/>
    <property type="match status" value="1"/>
</dbReference>
<dbReference type="PANTHER" id="PTHR43785">
    <property type="entry name" value="GAMMA-GLUTAMYLPUTRESCINE SYNTHETASE"/>
    <property type="match status" value="1"/>
</dbReference>
<dbReference type="PANTHER" id="PTHR43785:SF12">
    <property type="entry name" value="TYPE-1 GLUTAMINE SYNTHETASE 2"/>
    <property type="match status" value="1"/>
</dbReference>
<dbReference type="Pfam" id="PF00120">
    <property type="entry name" value="Gln-synt_C"/>
    <property type="match status" value="1"/>
</dbReference>
<dbReference type="Pfam" id="PF03951">
    <property type="entry name" value="Gln-synt_N"/>
    <property type="match status" value="1"/>
</dbReference>
<dbReference type="SMART" id="SM01230">
    <property type="entry name" value="Gln-synt_C"/>
    <property type="match status" value="1"/>
</dbReference>
<dbReference type="SUPFAM" id="SSF54368">
    <property type="entry name" value="Glutamine synthetase, N-terminal domain"/>
    <property type="match status" value="1"/>
</dbReference>
<dbReference type="SUPFAM" id="SSF55931">
    <property type="entry name" value="Glutamine synthetase/guanido kinase"/>
    <property type="match status" value="1"/>
</dbReference>
<dbReference type="PROSITE" id="PS00180">
    <property type="entry name" value="GLNA_1"/>
    <property type="match status" value="1"/>
</dbReference>
<dbReference type="PROSITE" id="PS00181">
    <property type="entry name" value="GLNA_ATP"/>
    <property type="match status" value="1"/>
</dbReference>
<dbReference type="PROSITE" id="PS51986">
    <property type="entry name" value="GS_BETA_GRASP"/>
    <property type="match status" value="1"/>
</dbReference>
<dbReference type="PROSITE" id="PS51987">
    <property type="entry name" value="GS_CATALYTIC"/>
    <property type="match status" value="1"/>
</dbReference>
<protein>
    <recommendedName>
        <fullName evidence="5">Glutamine synthetase</fullName>
        <shortName evidence="5">GS</shortName>
        <ecNumber evidence="5">6.3.1.2</ecNumber>
    </recommendedName>
    <alternativeName>
        <fullName evidence="5">Glutamate--ammonia ligase</fullName>
    </alternativeName>
    <alternativeName>
        <fullName evidence="5">Glutamine synthetase I alpha</fullName>
        <shortName evidence="5">GSI alpha</shortName>
    </alternativeName>
</protein>
<comment type="function">
    <text evidence="5">Probably involved in nitrogen metabolism via ammonium assimilation. Catalyzes the ATP-dependent biosynthesis of glutamine from glutamate and ammonia.</text>
</comment>
<comment type="catalytic activity">
    <reaction evidence="5">
        <text>L-glutamate + NH4(+) + ATP = L-glutamine + ADP + phosphate + H(+)</text>
        <dbReference type="Rhea" id="RHEA:16169"/>
        <dbReference type="ChEBI" id="CHEBI:15378"/>
        <dbReference type="ChEBI" id="CHEBI:28938"/>
        <dbReference type="ChEBI" id="CHEBI:29985"/>
        <dbReference type="ChEBI" id="CHEBI:30616"/>
        <dbReference type="ChEBI" id="CHEBI:43474"/>
        <dbReference type="ChEBI" id="CHEBI:58359"/>
        <dbReference type="ChEBI" id="CHEBI:456216"/>
        <dbReference type="EC" id="6.3.1.2"/>
    </reaction>
</comment>
<comment type="cofactor">
    <cofactor evidence="5">
        <name>Mg(2+)</name>
        <dbReference type="ChEBI" id="CHEBI:18420"/>
    </cofactor>
    <text evidence="4">Binds 2 Mg(2+) ions per subunit.</text>
</comment>
<comment type="subunit">
    <text evidence="5">Oligomer of 12 subunits arranged in the form of two hexagons.</text>
</comment>
<comment type="subcellular location">
    <subcellularLocation>
        <location evidence="5">Cytoplasm</location>
    </subcellularLocation>
</comment>
<comment type="similarity">
    <text evidence="5">Belongs to the glutamine synthetase family.</text>
</comment>
<organism>
    <name type="scientific">Pyrococcus furiosus (strain ATCC 43587 / DSM 3638 / JCM 8422 / Vc1)</name>
    <dbReference type="NCBI Taxonomy" id="186497"/>
    <lineage>
        <taxon>Archaea</taxon>
        <taxon>Methanobacteriati</taxon>
        <taxon>Methanobacteriota</taxon>
        <taxon>Thermococci</taxon>
        <taxon>Thermococcales</taxon>
        <taxon>Thermococcaceae</taxon>
        <taxon>Pyrococcus</taxon>
    </lineage>
</organism>
<name>GLNA_PYRFU</name>
<proteinExistence type="inferred from homology"/>
<accession>Q05907</accession>